<reference key="1">
    <citation type="journal article" date="2002" name="Nature">
        <title>The genome sequence of Schizosaccharomyces pombe.</title>
        <authorList>
            <person name="Wood V."/>
            <person name="Gwilliam R."/>
            <person name="Rajandream M.A."/>
            <person name="Lyne M.H."/>
            <person name="Lyne R."/>
            <person name="Stewart A."/>
            <person name="Sgouros J.G."/>
            <person name="Peat N."/>
            <person name="Hayles J."/>
            <person name="Baker S.G."/>
            <person name="Basham D."/>
            <person name="Bowman S."/>
            <person name="Brooks K."/>
            <person name="Brown D."/>
            <person name="Brown S."/>
            <person name="Chillingworth T."/>
            <person name="Churcher C.M."/>
            <person name="Collins M."/>
            <person name="Connor R."/>
            <person name="Cronin A."/>
            <person name="Davis P."/>
            <person name="Feltwell T."/>
            <person name="Fraser A."/>
            <person name="Gentles S."/>
            <person name="Goble A."/>
            <person name="Hamlin N."/>
            <person name="Harris D.E."/>
            <person name="Hidalgo J."/>
            <person name="Hodgson G."/>
            <person name="Holroyd S."/>
            <person name="Hornsby T."/>
            <person name="Howarth S."/>
            <person name="Huckle E.J."/>
            <person name="Hunt S."/>
            <person name="Jagels K."/>
            <person name="James K.D."/>
            <person name="Jones L."/>
            <person name="Jones M."/>
            <person name="Leather S."/>
            <person name="McDonald S."/>
            <person name="McLean J."/>
            <person name="Mooney P."/>
            <person name="Moule S."/>
            <person name="Mungall K.L."/>
            <person name="Murphy L.D."/>
            <person name="Niblett D."/>
            <person name="Odell C."/>
            <person name="Oliver K."/>
            <person name="O'Neil S."/>
            <person name="Pearson D."/>
            <person name="Quail M.A."/>
            <person name="Rabbinowitsch E."/>
            <person name="Rutherford K.M."/>
            <person name="Rutter S."/>
            <person name="Saunders D."/>
            <person name="Seeger K."/>
            <person name="Sharp S."/>
            <person name="Skelton J."/>
            <person name="Simmonds M.N."/>
            <person name="Squares R."/>
            <person name="Squares S."/>
            <person name="Stevens K."/>
            <person name="Taylor K."/>
            <person name="Taylor R.G."/>
            <person name="Tivey A."/>
            <person name="Walsh S.V."/>
            <person name="Warren T."/>
            <person name="Whitehead S."/>
            <person name="Woodward J.R."/>
            <person name="Volckaert G."/>
            <person name="Aert R."/>
            <person name="Robben J."/>
            <person name="Grymonprez B."/>
            <person name="Weltjens I."/>
            <person name="Vanstreels E."/>
            <person name="Rieger M."/>
            <person name="Schaefer M."/>
            <person name="Mueller-Auer S."/>
            <person name="Gabel C."/>
            <person name="Fuchs M."/>
            <person name="Duesterhoeft A."/>
            <person name="Fritzc C."/>
            <person name="Holzer E."/>
            <person name="Moestl D."/>
            <person name="Hilbert H."/>
            <person name="Borzym K."/>
            <person name="Langer I."/>
            <person name="Beck A."/>
            <person name="Lehrach H."/>
            <person name="Reinhardt R."/>
            <person name="Pohl T.M."/>
            <person name="Eger P."/>
            <person name="Zimmermann W."/>
            <person name="Wedler H."/>
            <person name="Wambutt R."/>
            <person name="Purnelle B."/>
            <person name="Goffeau A."/>
            <person name="Cadieu E."/>
            <person name="Dreano S."/>
            <person name="Gloux S."/>
            <person name="Lelaure V."/>
            <person name="Mottier S."/>
            <person name="Galibert F."/>
            <person name="Aves S.J."/>
            <person name="Xiang Z."/>
            <person name="Hunt C."/>
            <person name="Moore K."/>
            <person name="Hurst S.M."/>
            <person name="Lucas M."/>
            <person name="Rochet M."/>
            <person name="Gaillardin C."/>
            <person name="Tallada V.A."/>
            <person name="Garzon A."/>
            <person name="Thode G."/>
            <person name="Daga R.R."/>
            <person name="Cruzado L."/>
            <person name="Jimenez J."/>
            <person name="Sanchez M."/>
            <person name="del Rey F."/>
            <person name="Benito J."/>
            <person name="Dominguez A."/>
            <person name="Revuelta J.L."/>
            <person name="Moreno S."/>
            <person name="Armstrong J."/>
            <person name="Forsburg S.L."/>
            <person name="Cerutti L."/>
            <person name="Lowe T."/>
            <person name="McCombie W.R."/>
            <person name="Paulsen I."/>
            <person name="Potashkin J."/>
            <person name="Shpakovski G.V."/>
            <person name="Ussery D."/>
            <person name="Barrell B.G."/>
            <person name="Nurse P."/>
        </authorList>
    </citation>
    <scope>NUCLEOTIDE SEQUENCE [LARGE SCALE GENOMIC DNA]</scope>
    <source>
        <strain>972 / ATCC 24843</strain>
    </source>
</reference>
<reference key="2">
    <citation type="journal article" date="2002" name="Mol. Cell. Biol.">
        <title>Proteomics analysis reveals stable multiprotein complexes in both fission and budding yeasts containing Myb-related Cdc5p/Cef1p, novel pre-mRNA splicing factors, and snRNAs.</title>
        <authorList>
            <person name="Ohi M.D."/>
            <person name="Link A.J."/>
            <person name="Ren L."/>
            <person name="Jennings J.L."/>
            <person name="McDonald W.H."/>
            <person name="Gould K.L."/>
        </authorList>
    </citation>
    <scope>IDENTIFICATION IN THE CWF COMPLEX</scope>
    <scope>IDENTIFICATION BY MASS SPECTROMETRY</scope>
</reference>
<organism>
    <name type="scientific">Schizosaccharomyces pombe (strain 972 / ATCC 24843)</name>
    <name type="common">Fission yeast</name>
    <dbReference type="NCBI Taxonomy" id="284812"/>
    <lineage>
        <taxon>Eukaryota</taxon>
        <taxon>Fungi</taxon>
        <taxon>Dikarya</taxon>
        <taxon>Ascomycota</taxon>
        <taxon>Taphrinomycotina</taxon>
        <taxon>Schizosaccharomycetes</taxon>
        <taxon>Schizosaccharomycetales</taxon>
        <taxon>Schizosaccharomycetaceae</taxon>
        <taxon>Schizosaccharomyces</taxon>
    </lineage>
</organism>
<dbReference type="EMBL" id="CU329671">
    <property type="protein sequence ID" value="CAB89877.1"/>
    <property type="molecule type" value="Genomic_DNA"/>
</dbReference>
<dbReference type="RefSeq" id="NP_596257.1">
    <property type="nucleotide sequence ID" value="NM_001022177.2"/>
</dbReference>
<dbReference type="SMR" id="Q9P6R8"/>
<dbReference type="BioGRID" id="276719">
    <property type="interactions" value="18"/>
</dbReference>
<dbReference type="FunCoup" id="Q9P6R8">
    <property type="interactions" value="115"/>
</dbReference>
<dbReference type="IntAct" id="Q9P6R8">
    <property type="interactions" value="1"/>
</dbReference>
<dbReference type="STRING" id="284812.Q9P6R8"/>
<dbReference type="iPTMnet" id="Q9P6R8"/>
<dbReference type="PaxDb" id="4896-SPBC13E7.02.1"/>
<dbReference type="EnsemblFungi" id="SPBC13E7.02.1">
    <property type="protein sequence ID" value="SPBC13E7.02.1:pep"/>
    <property type="gene ID" value="SPBC13E7.02"/>
</dbReference>
<dbReference type="GeneID" id="2540186"/>
<dbReference type="KEGG" id="spo:2540186"/>
<dbReference type="PomBase" id="SPBC13E7.02">
    <property type="gene designation" value="cwf24"/>
</dbReference>
<dbReference type="VEuPathDB" id="FungiDB:SPBC13E7.02"/>
<dbReference type="eggNOG" id="KOG1813">
    <property type="taxonomic scope" value="Eukaryota"/>
</dbReference>
<dbReference type="eggNOG" id="KOG3138">
    <property type="taxonomic scope" value="Eukaryota"/>
</dbReference>
<dbReference type="HOGENOM" id="CLU_572605_0_0_1"/>
<dbReference type="InParanoid" id="Q9P6R8"/>
<dbReference type="OMA" id="TCKFLHM"/>
<dbReference type="PRO" id="PR:Q9P6R8"/>
<dbReference type="Proteomes" id="UP000002485">
    <property type="component" value="Chromosome II"/>
</dbReference>
<dbReference type="GO" id="GO:0005634">
    <property type="term" value="C:nucleus"/>
    <property type="evidence" value="ECO:0007005"/>
    <property type="project" value="PomBase"/>
</dbReference>
<dbReference type="GO" id="GO:0005681">
    <property type="term" value="C:spliceosomal complex"/>
    <property type="evidence" value="ECO:0000314"/>
    <property type="project" value="PomBase"/>
</dbReference>
<dbReference type="GO" id="GO:0005684">
    <property type="term" value="C:U2-type spliceosomal complex"/>
    <property type="evidence" value="ECO:0000318"/>
    <property type="project" value="GO_Central"/>
</dbReference>
<dbReference type="GO" id="GO:0003677">
    <property type="term" value="F:DNA binding"/>
    <property type="evidence" value="ECO:0007669"/>
    <property type="project" value="UniProtKB-KW"/>
</dbReference>
<dbReference type="GO" id="GO:0008080">
    <property type="term" value="F:N-acetyltransferase activity"/>
    <property type="evidence" value="ECO:0000255"/>
    <property type="project" value="PomBase"/>
</dbReference>
<dbReference type="GO" id="GO:0061630">
    <property type="term" value="F:ubiquitin protein ligase activity"/>
    <property type="evidence" value="ECO:0000255"/>
    <property type="project" value="PomBase"/>
</dbReference>
<dbReference type="GO" id="GO:0008270">
    <property type="term" value="F:zinc ion binding"/>
    <property type="evidence" value="ECO:0000255"/>
    <property type="project" value="PomBase"/>
</dbReference>
<dbReference type="GO" id="GO:0045292">
    <property type="term" value="P:mRNA cis splicing, via spliceosome"/>
    <property type="evidence" value="ECO:0000304"/>
    <property type="project" value="PomBase"/>
</dbReference>
<dbReference type="GO" id="GO:0034247">
    <property type="term" value="P:snoRNA splicing"/>
    <property type="evidence" value="ECO:0000318"/>
    <property type="project" value="GO_Central"/>
</dbReference>
<dbReference type="CDD" id="cd04301">
    <property type="entry name" value="NAT_SF"/>
    <property type="match status" value="1"/>
</dbReference>
<dbReference type="CDD" id="cd16539">
    <property type="entry name" value="RING-HC_RNF113A_B"/>
    <property type="match status" value="1"/>
</dbReference>
<dbReference type="Gene3D" id="3.40.630.30">
    <property type="match status" value="1"/>
</dbReference>
<dbReference type="Gene3D" id="4.10.1000.10">
    <property type="entry name" value="Zinc finger, CCCH-type"/>
    <property type="match status" value="1"/>
</dbReference>
<dbReference type="Gene3D" id="3.30.40.10">
    <property type="entry name" value="Zinc/RING finger domain, C3HC4 (zinc finger)"/>
    <property type="match status" value="1"/>
</dbReference>
<dbReference type="InterPro" id="IPR016181">
    <property type="entry name" value="Acyl_CoA_acyltransferase"/>
</dbReference>
<dbReference type="InterPro" id="IPR039971">
    <property type="entry name" value="CWC24-like"/>
</dbReference>
<dbReference type="InterPro" id="IPR000182">
    <property type="entry name" value="GNAT_dom"/>
</dbReference>
<dbReference type="InterPro" id="IPR018957">
    <property type="entry name" value="Znf_C3HC4_RING-type"/>
</dbReference>
<dbReference type="InterPro" id="IPR000571">
    <property type="entry name" value="Znf_CCCH"/>
</dbReference>
<dbReference type="InterPro" id="IPR036855">
    <property type="entry name" value="Znf_CCCH_sf"/>
</dbReference>
<dbReference type="InterPro" id="IPR001841">
    <property type="entry name" value="Znf_RING"/>
</dbReference>
<dbReference type="InterPro" id="IPR013083">
    <property type="entry name" value="Znf_RING/FYVE/PHD"/>
</dbReference>
<dbReference type="InterPro" id="IPR017907">
    <property type="entry name" value="Znf_RING_CS"/>
</dbReference>
<dbReference type="PANTHER" id="PTHR12930:SF0">
    <property type="entry name" value="RING FINGER PROTEIN 113B"/>
    <property type="match status" value="1"/>
</dbReference>
<dbReference type="PANTHER" id="PTHR12930">
    <property type="entry name" value="ZINC FINGER PROTEIN 183"/>
    <property type="match status" value="1"/>
</dbReference>
<dbReference type="Pfam" id="PF00583">
    <property type="entry name" value="Acetyltransf_1"/>
    <property type="match status" value="1"/>
</dbReference>
<dbReference type="Pfam" id="PF00097">
    <property type="entry name" value="zf-C3HC4"/>
    <property type="match status" value="1"/>
</dbReference>
<dbReference type="Pfam" id="PF00642">
    <property type="entry name" value="zf-CCCH"/>
    <property type="match status" value="1"/>
</dbReference>
<dbReference type="SMART" id="SM00184">
    <property type="entry name" value="RING"/>
    <property type="match status" value="1"/>
</dbReference>
<dbReference type="SMART" id="SM00356">
    <property type="entry name" value="ZnF_C3H1"/>
    <property type="match status" value="1"/>
</dbReference>
<dbReference type="SUPFAM" id="SSF55729">
    <property type="entry name" value="Acyl-CoA N-acyltransferases (Nat)"/>
    <property type="match status" value="1"/>
</dbReference>
<dbReference type="SUPFAM" id="SSF90229">
    <property type="entry name" value="CCCH zinc finger"/>
    <property type="match status" value="1"/>
</dbReference>
<dbReference type="SUPFAM" id="SSF57850">
    <property type="entry name" value="RING/U-box"/>
    <property type="match status" value="1"/>
</dbReference>
<dbReference type="PROSITE" id="PS51186">
    <property type="entry name" value="GNAT"/>
    <property type="match status" value="1"/>
</dbReference>
<dbReference type="PROSITE" id="PS50103">
    <property type="entry name" value="ZF_C3H1"/>
    <property type="match status" value="1"/>
</dbReference>
<dbReference type="PROSITE" id="PS00518">
    <property type="entry name" value="ZF_RING_1"/>
    <property type="match status" value="1"/>
</dbReference>
<dbReference type="PROSITE" id="PS50089">
    <property type="entry name" value="ZF_RING_2"/>
    <property type="match status" value="1"/>
</dbReference>
<feature type="chain" id="PRO_0000055892" description="Pre-mRNA-splicing factor cwf24">
    <location>
        <begin position="1"/>
        <end position="533"/>
    </location>
</feature>
<feature type="domain" description="N-acetyltransferase" evidence="3">
    <location>
        <begin position="379"/>
        <end position="524"/>
    </location>
</feature>
<feature type="zinc finger region" description="C3H1-type" evidence="4">
    <location>
        <begin position="184"/>
        <end position="212"/>
    </location>
</feature>
<feature type="zinc finger region" description="RING-type" evidence="2">
    <location>
        <begin position="254"/>
        <end position="292"/>
    </location>
</feature>
<feature type="region of interest" description="Disordered" evidence="5">
    <location>
        <begin position="1"/>
        <end position="69"/>
    </location>
</feature>
<feature type="compositionally biased region" description="Polar residues" evidence="5">
    <location>
        <begin position="1"/>
        <end position="17"/>
    </location>
</feature>
<feature type="compositionally biased region" description="Basic residues" evidence="5">
    <location>
        <begin position="27"/>
        <end position="43"/>
    </location>
</feature>
<gene>
    <name type="primary">cwf24</name>
    <name type="ORF">SPBC13E7.02</name>
</gene>
<keyword id="KW-0238">DNA-binding</keyword>
<keyword id="KW-0479">Metal-binding</keyword>
<keyword id="KW-0507">mRNA processing</keyword>
<keyword id="KW-0508">mRNA splicing</keyword>
<keyword id="KW-0539">Nucleus</keyword>
<keyword id="KW-1185">Reference proteome</keyword>
<keyword id="KW-0747">Spliceosome</keyword>
<keyword id="KW-0862">Zinc</keyword>
<keyword id="KW-0863">Zinc-finger</keyword>
<protein>
    <recommendedName>
        <fullName>Pre-mRNA-splicing factor cwf24</fullName>
    </recommendedName>
    <alternativeName>
        <fullName>Complexed with cdc5 protein 24</fullName>
    </alternativeName>
</protein>
<accession>Q9P6R8</accession>
<comment type="function">
    <text>Involved in mRNA splicing.</text>
</comment>
<comment type="subunit">
    <text evidence="6">Belongs to the 40S cdc5-associated complex (or cwf complex), a spliceosome sub-complex reminiscent of a late-stage spliceosome composed of the U2, U5 and U6 snRNAs and at least brr2, cdc5, cwf2/prp3, cwf3/syf1, cwf4/syf3, cwf5/ecm2, spp42/cwf6, cwf7/spf27, cwf8, cwf9, cwf10, cwf11, cwf12, prp45/cwf13, cwf14, cwf15, cwf16, cwf17, cwf18, cwf19, cwf20, cwf21, cwf22, cwf23, cwf24, cwf25, cwf26, cyp7/cwf27, cwf28, cwf29/ist3, lea1, msl1, prp5/cwf1, prp10, prp12/sap130, prp17, prp22, sap61, sap62, sap114, sap145, slu7, smb1, smd1, smd3, smf1, smg1 and syf2.</text>
</comment>
<comment type="subcellular location">
    <subcellularLocation>
        <location evidence="1">Nucleus</location>
    </subcellularLocation>
</comment>
<comment type="similarity">
    <text evidence="7">Belongs to the CWC24 family.</text>
</comment>
<name>CWC24_SCHPO</name>
<proteinExistence type="evidence at protein level"/>
<sequence>MEQKNLNINQASGSKINTELAVPIFQSRRRHRPRQGLKRKKGFKRDDDSGGSSESSNEDMRDNIPIVSGRKKTVRLNRLQRESEQFENSALKDINVEYQSNLSATGESVNTTTVSAINEDTREVILGRPSPKLANQSTLPTELFQSQNDYSRFLPKRKDFEKKSQVGPVLSSNASTVRMNTIIDYQPDVCKDYKLTGYCGYGDTCKFLHMREDYKAGWQLDREWDSVQEKYKKGAKLEEGMVKNEKKEDIPFVCLICKKDYRSPIATTCGHHFCEQCAITRYRKTPTCIQCGADTKGLFSVDKNFDRLLKNRKSKNDEAVKQKVGGFESNNSATTEVSERKDREASFQGFADTLAKPNTSAQQKMPSLGDNSNTIISKYFIREITESNIVHFKRLVRVVLEASYSDKFYRLVLKNPDYARIATFEDKFVGAISSLVAEDNSLYVTVLCVLAPYRCLGIGSLLIDHVKKTAINNNIDRISLHVQTTNESVIKWYTAHGFKIVKQINDFYRRLENKSAFYMVCPLSAHNNIISNH</sequence>
<evidence type="ECO:0000250" key="1"/>
<evidence type="ECO:0000255" key="2">
    <source>
        <dbReference type="PROSITE-ProRule" id="PRU00175"/>
    </source>
</evidence>
<evidence type="ECO:0000255" key="3">
    <source>
        <dbReference type="PROSITE-ProRule" id="PRU00532"/>
    </source>
</evidence>
<evidence type="ECO:0000255" key="4">
    <source>
        <dbReference type="PROSITE-ProRule" id="PRU00723"/>
    </source>
</evidence>
<evidence type="ECO:0000256" key="5">
    <source>
        <dbReference type="SAM" id="MobiDB-lite"/>
    </source>
</evidence>
<evidence type="ECO:0000269" key="6">
    <source>
    </source>
</evidence>
<evidence type="ECO:0000305" key="7"/>